<sequence length="368" mass="38249">MTMAKNILRAITAIVRRDAKTPDTDDSAGSVTFDGALDDLDVAGLVEVGRGPIADIAIDADRETIVVTNSAADCLTVINPYTLAPVGSVRLNGEPFAVAAADDRAYVSVVTAGHDAIKVVDTITGSVLAEYPLAMTVTALAMSPDGKRVFVGRSGHDRIDVAVIDTAAERVGTIDLASGAGAGVDALRVDASGKRLYVATTDPRGSRMVTVNIETAQIESTVWIGAPIRDLALGADGKALVLTSDRQRRGVVHIVDLSTAAVVGAIQIGGAPTQLVLSPDATRAYVVDYDRVIVLCTLTNEILGSIDVGMQPAAVAVRRDGARVYVADYSGQVNAFDVAAELPALYSRLVASEPRQDATTVLPSLQTA</sequence>
<feature type="chain" id="PRO_0000452602" description="Seven-bladed beta-propeller protein MSMEG_5308">
    <location>
        <begin position="1"/>
        <end position="368"/>
    </location>
</feature>
<protein>
    <recommendedName>
        <fullName evidence="2">Seven-bladed beta-propeller protein MSMEG_5308</fullName>
    </recommendedName>
</protein>
<evidence type="ECO:0000269" key="1">
    <source>
    </source>
</evidence>
<evidence type="ECO:0000303" key="2">
    <source>
    </source>
</evidence>
<evidence type="ECO:0000312" key="3">
    <source>
        <dbReference type="EMBL" id="ABK75599.1"/>
    </source>
</evidence>
<evidence type="ECO:0000312" key="4">
    <source>
        <dbReference type="Proteomes" id="UP000000757"/>
    </source>
</evidence>
<proteinExistence type="evidence at protein level"/>
<keyword id="KW-1185">Reference proteome</keyword>
<name>Y5308_MYCS2</name>
<organism evidence="3">
    <name type="scientific">Mycolicibacterium smegmatis (strain ATCC 700084 / mc(2)155)</name>
    <name type="common">Mycobacterium smegmatis</name>
    <dbReference type="NCBI Taxonomy" id="246196"/>
    <lineage>
        <taxon>Bacteria</taxon>
        <taxon>Bacillati</taxon>
        <taxon>Actinomycetota</taxon>
        <taxon>Actinomycetes</taxon>
        <taxon>Mycobacteriales</taxon>
        <taxon>Mycobacteriaceae</taxon>
        <taxon>Mycolicibacterium</taxon>
    </lineage>
</organism>
<gene>
    <name evidence="2 3" type="ordered locus">MSMEG_5308</name>
</gene>
<reference evidence="3 4" key="1">
    <citation type="submission" date="2006-10" db="EMBL/GenBank/DDBJ databases">
        <authorList>
            <person name="Fleischmann R.D."/>
            <person name="Dodson R.J."/>
            <person name="Haft D.H."/>
            <person name="Merkel J.S."/>
            <person name="Nelson W.C."/>
            <person name="Fraser C.M."/>
        </authorList>
    </citation>
    <scope>NUCLEOTIDE SEQUENCE [LARGE SCALE GENOMIC DNA]</scope>
    <source>
        <strain evidence="4">ATCC 700084 / mc(2)155</strain>
    </source>
</reference>
<reference key="2">
    <citation type="journal article" date="2019" name="MBio">
        <title>Two Accessory Proteins Govern MmpL3 Mycolic Acid Transport in Mycobacteria.</title>
        <authorList>
            <person name="Fay A."/>
            <person name="Czudnochowski N."/>
            <person name="Rock J.M."/>
            <person name="Johnson J.R."/>
            <person name="Krogan N.J."/>
            <person name="Rosenberg O."/>
            <person name="Glickman M.S."/>
        </authorList>
    </citation>
    <scope>FUNCTION</scope>
    <scope>INTERACTION WITH MMPL3 AND TTFA</scope>
    <scope>SUBCELLULAR LOCATION</scope>
    <scope>IDENTIFICATION BY MASS SPECTROMETRY</scope>
    <scope>DISRUPTION PHENOTYPE</scope>
    <source>
        <strain evidence="2">ATCC 700084 / mc(2)155</strain>
    </source>
</reference>
<comment type="function">
    <text evidence="1">Stabilizes the MmpL3/TtfA trehalose monomycolate (TMM) transport complex under stress conditions.</text>
</comment>
<comment type="subunit">
    <text evidence="1">Interacts with MmpL3 and TtfA.</text>
</comment>
<comment type="subcellular location">
    <subcellularLocation>
        <location evidence="1">Cell septum</location>
    </subcellularLocation>
    <subcellularLocation>
        <location evidence="1">Cell tip</location>
    </subcellularLocation>
</comment>
<comment type="disruption phenotype">
    <text evidence="1">No visible phenotype.</text>
</comment>
<dbReference type="EMBL" id="CP000480">
    <property type="protein sequence ID" value="ABK75599.1"/>
    <property type="molecule type" value="Genomic_DNA"/>
</dbReference>
<dbReference type="RefSeq" id="WP_011730461.1">
    <property type="nucleotide sequence ID" value="NC_008596.1"/>
</dbReference>
<dbReference type="RefSeq" id="YP_889554.1">
    <property type="nucleotide sequence ID" value="NC_008596.1"/>
</dbReference>
<dbReference type="SMR" id="A0R316"/>
<dbReference type="STRING" id="246196.MSMEG_5308"/>
<dbReference type="PaxDb" id="246196-MSMEI_5165"/>
<dbReference type="GeneID" id="93459963"/>
<dbReference type="KEGG" id="msm:MSMEG_5308"/>
<dbReference type="PATRIC" id="fig|246196.19.peg.5178"/>
<dbReference type="eggNOG" id="COG3391">
    <property type="taxonomic scope" value="Bacteria"/>
</dbReference>
<dbReference type="OrthoDB" id="4565246at2"/>
<dbReference type="Proteomes" id="UP000000757">
    <property type="component" value="Chromosome"/>
</dbReference>
<dbReference type="GO" id="GO:0030428">
    <property type="term" value="C:cell septum"/>
    <property type="evidence" value="ECO:0007669"/>
    <property type="project" value="UniProtKB-SubCell"/>
</dbReference>
<dbReference type="GO" id="GO:0051286">
    <property type="term" value="C:cell tip"/>
    <property type="evidence" value="ECO:0007669"/>
    <property type="project" value="UniProtKB-SubCell"/>
</dbReference>
<dbReference type="Gene3D" id="2.130.10.10">
    <property type="entry name" value="YVTN repeat-like/Quinoprotein amine dehydrogenase"/>
    <property type="match status" value="2"/>
</dbReference>
<dbReference type="InterPro" id="IPR051200">
    <property type="entry name" value="Host-pathogen_enzymatic-act"/>
</dbReference>
<dbReference type="InterPro" id="IPR011044">
    <property type="entry name" value="Quino_amine_DH_bsu"/>
</dbReference>
<dbReference type="InterPro" id="IPR015943">
    <property type="entry name" value="WD40/YVTN_repeat-like_dom_sf"/>
</dbReference>
<dbReference type="PANTHER" id="PTHR47197:SF3">
    <property type="entry name" value="DIHYDRO-HEME D1 DEHYDROGENASE"/>
    <property type="match status" value="1"/>
</dbReference>
<dbReference type="PANTHER" id="PTHR47197">
    <property type="entry name" value="PROTEIN NIRF"/>
    <property type="match status" value="1"/>
</dbReference>
<dbReference type="SUPFAM" id="SSF50969">
    <property type="entry name" value="YVTN repeat-like/Quinoprotein amine dehydrogenase"/>
    <property type="match status" value="1"/>
</dbReference>
<accession>A0R316</accession>